<reference key="1">
    <citation type="journal article" date="2009" name="Infect. Immun.">
        <title>Comparative genomics reveal extensive transposon-mediated genomic plasticity and diversity among potential effector proteins within the genus Coxiella.</title>
        <authorList>
            <person name="Beare P.A."/>
            <person name="Unsworth N."/>
            <person name="Andoh M."/>
            <person name="Voth D.E."/>
            <person name="Omsland A."/>
            <person name="Gilk S.D."/>
            <person name="Williams K.P."/>
            <person name="Sobral B.W."/>
            <person name="Kupko J.J. III"/>
            <person name="Porcella S.F."/>
            <person name="Samuel J.E."/>
            <person name="Heinzen R.A."/>
        </authorList>
    </citation>
    <scope>NUCLEOTIDE SEQUENCE [LARGE SCALE GENOMIC DNA]</scope>
    <source>
        <strain>CbuK_Q154</strain>
    </source>
</reference>
<gene>
    <name evidence="1" type="primary">fabZ</name>
    <name type="ordered locus">CbuK_1436</name>
</gene>
<dbReference type="EC" id="4.2.1.59" evidence="1"/>
<dbReference type="EMBL" id="CP001020">
    <property type="protein sequence ID" value="ACJ20607.1"/>
    <property type="molecule type" value="Genomic_DNA"/>
</dbReference>
<dbReference type="RefSeq" id="WP_010957689.1">
    <property type="nucleotide sequence ID" value="NC_011528.1"/>
</dbReference>
<dbReference type="SMR" id="B6J8K8"/>
<dbReference type="KEGG" id="cbc:CbuK_1436"/>
<dbReference type="HOGENOM" id="CLU_078912_1_0_6"/>
<dbReference type="GO" id="GO:0005737">
    <property type="term" value="C:cytoplasm"/>
    <property type="evidence" value="ECO:0007669"/>
    <property type="project" value="UniProtKB-SubCell"/>
</dbReference>
<dbReference type="GO" id="GO:0016020">
    <property type="term" value="C:membrane"/>
    <property type="evidence" value="ECO:0007669"/>
    <property type="project" value="GOC"/>
</dbReference>
<dbReference type="GO" id="GO:0019171">
    <property type="term" value="F:(3R)-hydroxyacyl-[acyl-carrier-protein] dehydratase activity"/>
    <property type="evidence" value="ECO:0007669"/>
    <property type="project" value="UniProtKB-EC"/>
</dbReference>
<dbReference type="GO" id="GO:0006633">
    <property type="term" value="P:fatty acid biosynthetic process"/>
    <property type="evidence" value="ECO:0007669"/>
    <property type="project" value="UniProtKB-UniRule"/>
</dbReference>
<dbReference type="GO" id="GO:0009245">
    <property type="term" value="P:lipid A biosynthetic process"/>
    <property type="evidence" value="ECO:0007669"/>
    <property type="project" value="UniProtKB-UniRule"/>
</dbReference>
<dbReference type="CDD" id="cd01288">
    <property type="entry name" value="FabZ"/>
    <property type="match status" value="1"/>
</dbReference>
<dbReference type="FunFam" id="3.10.129.10:FF:000001">
    <property type="entry name" value="3-hydroxyacyl-[acyl-carrier-protein] dehydratase FabZ"/>
    <property type="match status" value="1"/>
</dbReference>
<dbReference type="Gene3D" id="3.10.129.10">
    <property type="entry name" value="Hotdog Thioesterase"/>
    <property type="match status" value="1"/>
</dbReference>
<dbReference type="HAMAP" id="MF_00406">
    <property type="entry name" value="FabZ"/>
    <property type="match status" value="1"/>
</dbReference>
<dbReference type="InterPro" id="IPR013114">
    <property type="entry name" value="FabA_FabZ"/>
</dbReference>
<dbReference type="InterPro" id="IPR010084">
    <property type="entry name" value="FabZ"/>
</dbReference>
<dbReference type="InterPro" id="IPR029069">
    <property type="entry name" value="HotDog_dom_sf"/>
</dbReference>
<dbReference type="NCBIfam" id="TIGR01750">
    <property type="entry name" value="fabZ"/>
    <property type="match status" value="1"/>
</dbReference>
<dbReference type="NCBIfam" id="NF000582">
    <property type="entry name" value="PRK00006.1"/>
    <property type="match status" value="1"/>
</dbReference>
<dbReference type="PANTHER" id="PTHR30272">
    <property type="entry name" value="3-HYDROXYACYL-[ACYL-CARRIER-PROTEIN] DEHYDRATASE"/>
    <property type="match status" value="1"/>
</dbReference>
<dbReference type="PANTHER" id="PTHR30272:SF1">
    <property type="entry name" value="3-HYDROXYACYL-[ACYL-CARRIER-PROTEIN] DEHYDRATASE"/>
    <property type="match status" value="1"/>
</dbReference>
<dbReference type="Pfam" id="PF07977">
    <property type="entry name" value="FabA"/>
    <property type="match status" value="1"/>
</dbReference>
<dbReference type="SUPFAM" id="SSF54637">
    <property type="entry name" value="Thioesterase/thiol ester dehydrase-isomerase"/>
    <property type="match status" value="1"/>
</dbReference>
<keyword id="KW-0963">Cytoplasm</keyword>
<keyword id="KW-0441">Lipid A biosynthesis</keyword>
<keyword id="KW-0444">Lipid biosynthesis</keyword>
<keyword id="KW-0443">Lipid metabolism</keyword>
<keyword id="KW-0456">Lyase</keyword>
<protein>
    <recommendedName>
        <fullName evidence="1">3-hydroxyacyl-[acyl-carrier-protein] dehydratase FabZ</fullName>
        <ecNumber evidence="1">4.2.1.59</ecNumber>
    </recommendedName>
    <alternativeName>
        <fullName evidence="1">(3R)-hydroxymyristoyl-[acyl-carrier-protein] dehydratase</fullName>
        <shortName evidence="1">(3R)-hydroxymyristoyl-ACP dehydrase</shortName>
    </alternativeName>
    <alternativeName>
        <fullName evidence="1">Beta-hydroxyacyl-ACP dehydratase</fullName>
    </alternativeName>
</protein>
<feature type="chain" id="PRO_1000197291" description="3-hydroxyacyl-[acyl-carrier-protein] dehydratase FabZ">
    <location>
        <begin position="1"/>
        <end position="145"/>
    </location>
</feature>
<feature type="active site" evidence="1">
    <location>
        <position position="50"/>
    </location>
</feature>
<sequence>MNVMNITDIKKYIPHRYPFLLIDRVIKIEKDKSLVAIKNVTVNEPFFTGHFPVRPVMPGVLIIESLAQAAGILIVKSLNLPEGHKDIYFFAGVDNARFKRVVEPGDQLTLEVKVLKVHRGLWKFEGKATVDDQLACKAELMTIKG</sequence>
<accession>B6J8K8</accession>
<evidence type="ECO:0000255" key="1">
    <source>
        <dbReference type="HAMAP-Rule" id="MF_00406"/>
    </source>
</evidence>
<proteinExistence type="inferred from homology"/>
<name>FABZ_COXB1</name>
<comment type="function">
    <text evidence="1">Involved in unsaturated fatty acids biosynthesis. Catalyzes the dehydration of short chain beta-hydroxyacyl-ACPs and long chain saturated and unsaturated beta-hydroxyacyl-ACPs.</text>
</comment>
<comment type="catalytic activity">
    <reaction evidence="1">
        <text>a (3R)-hydroxyacyl-[ACP] = a (2E)-enoyl-[ACP] + H2O</text>
        <dbReference type="Rhea" id="RHEA:13097"/>
        <dbReference type="Rhea" id="RHEA-COMP:9925"/>
        <dbReference type="Rhea" id="RHEA-COMP:9945"/>
        <dbReference type="ChEBI" id="CHEBI:15377"/>
        <dbReference type="ChEBI" id="CHEBI:78784"/>
        <dbReference type="ChEBI" id="CHEBI:78827"/>
        <dbReference type="EC" id="4.2.1.59"/>
    </reaction>
</comment>
<comment type="subcellular location">
    <subcellularLocation>
        <location evidence="1">Cytoplasm</location>
    </subcellularLocation>
</comment>
<comment type="similarity">
    <text evidence="1">Belongs to the thioester dehydratase family. FabZ subfamily.</text>
</comment>
<organism>
    <name type="scientific">Coxiella burnetii (strain CbuK_Q154)</name>
    <name type="common">Coxiella burnetii (strain Q154)</name>
    <dbReference type="NCBI Taxonomy" id="434924"/>
    <lineage>
        <taxon>Bacteria</taxon>
        <taxon>Pseudomonadati</taxon>
        <taxon>Pseudomonadota</taxon>
        <taxon>Gammaproteobacteria</taxon>
        <taxon>Legionellales</taxon>
        <taxon>Coxiellaceae</taxon>
        <taxon>Coxiella</taxon>
    </lineage>
</organism>